<protein>
    <recommendedName>
        <fullName evidence="1">Small ribosomal subunit protein uS11c</fullName>
    </recommendedName>
    <alternativeName>
        <fullName evidence="2">30S ribosomal protein S11, chloroplastic</fullName>
    </alternativeName>
</protein>
<sequence length="130" mass="13793">MAQTTRKSTIRKEKNSFTSGVVHIQSTFNNTIVTITNLTGDTISWASAGSSGFKGARKSTPFAAQTAAEKAALEALSTGMKTVEILVKGQGSGRETAIRAIEGAGFDIISIQDITSVPHNGCRPPKRRRV</sequence>
<geneLocation type="chloroplast"/>
<accession>A0T0J9</accession>
<evidence type="ECO:0000255" key="1">
    <source>
        <dbReference type="HAMAP-Rule" id="MF_01310"/>
    </source>
</evidence>
<evidence type="ECO:0000305" key="2"/>
<name>RR11_PHATC</name>
<comment type="subunit">
    <text evidence="1">Part of the 30S ribosomal subunit.</text>
</comment>
<comment type="subcellular location">
    <subcellularLocation>
        <location>Plastid</location>
        <location>Chloroplast</location>
    </subcellularLocation>
</comment>
<comment type="similarity">
    <text evidence="1">Belongs to the universal ribosomal protein uS11 family.</text>
</comment>
<feature type="chain" id="PRO_0000276661" description="Small ribosomal subunit protein uS11c">
    <location>
        <begin position="1"/>
        <end position="130"/>
    </location>
</feature>
<reference key="1">
    <citation type="journal article" date="2007" name="Mol. Genet. Genomics">
        <title>Chloroplast genomes of the diatoms Phaeodactylum tricornutum and Thalassiosira pseudonana: comparison with other plastid genomes of the red lineage.</title>
        <authorList>
            <person name="Oudot-Le Secq M.-P."/>
            <person name="Grimwood J."/>
            <person name="Shapiro H."/>
            <person name="Armbrust E.V."/>
            <person name="Bowler C."/>
            <person name="Green B.R."/>
        </authorList>
    </citation>
    <scope>NUCLEOTIDE SEQUENCE [LARGE SCALE GENOMIC DNA]</scope>
    <source>
        <strain>CCAP 1055/1</strain>
    </source>
</reference>
<keyword id="KW-0150">Chloroplast</keyword>
<keyword id="KW-0934">Plastid</keyword>
<keyword id="KW-1185">Reference proteome</keyword>
<keyword id="KW-0687">Ribonucleoprotein</keyword>
<keyword id="KW-0689">Ribosomal protein</keyword>
<keyword id="KW-0694">RNA-binding</keyword>
<keyword id="KW-0699">rRNA-binding</keyword>
<dbReference type="EMBL" id="EF067920">
    <property type="protein sequence ID" value="ABK20697.1"/>
    <property type="molecule type" value="Genomic_DNA"/>
</dbReference>
<dbReference type="RefSeq" id="YP_874474.1">
    <property type="nucleotide sequence ID" value="NC_008588.1"/>
</dbReference>
<dbReference type="SMR" id="A0T0J9"/>
<dbReference type="STRING" id="556484.A0T0J9"/>
<dbReference type="GeneID" id="4524649"/>
<dbReference type="InParanoid" id="A0T0J9"/>
<dbReference type="Proteomes" id="UP000000759">
    <property type="component" value="Chloroplast"/>
</dbReference>
<dbReference type="GO" id="GO:0009507">
    <property type="term" value="C:chloroplast"/>
    <property type="evidence" value="ECO:0007669"/>
    <property type="project" value="UniProtKB-SubCell"/>
</dbReference>
<dbReference type="GO" id="GO:1990904">
    <property type="term" value="C:ribonucleoprotein complex"/>
    <property type="evidence" value="ECO:0007669"/>
    <property type="project" value="UniProtKB-KW"/>
</dbReference>
<dbReference type="GO" id="GO:0005840">
    <property type="term" value="C:ribosome"/>
    <property type="evidence" value="ECO:0007669"/>
    <property type="project" value="UniProtKB-KW"/>
</dbReference>
<dbReference type="GO" id="GO:0019843">
    <property type="term" value="F:rRNA binding"/>
    <property type="evidence" value="ECO:0007669"/>
    <property type="project" value="UniProtKB-UniRule"/>
</dbReference>
<dbReference type="GO" id="GO:0003735">
    <property type="term" value="F:structural constituent of ribosome"/>
    <property type="evidence" value="ECO:0007669"/>
    <property type="project" value="InterPro"/>
</dbReference>
<dbReference type="GO" id="GO:0006412">
    <property type="term" value="P:translation"/>
    <property type="evidence" value="ECO:0007669"/>
    <property type="project" value="UniProtKB-UniRule"/>
</dbReference>
<dbReference type="FunFam" id="3.30.420.80:FF:000001">
    <property type="entry name" value="30S ribosomal protein S11"/>
    <property type="match status" value="1"/>
</dbReference>
<dbReference type="Gene3D" id="3.30.420.80">
    <property type="entry name" value="Ribosomal protein S11"/>
    <property type="match status" value="1"/>
</dbReference>
<dbReference type="HAMAP" id="MF_01310">
    <property type="entry name" value="Ribosomal_uS11"/>
    <property type="match status" value="1"/>
</dbReference>
<dbReference type="InterPro" id="IPR001971">
    <property type="entry name" value="Ribosomal_uS11"/>
</dbReference>
<dbReference type="InterPro" id="IPR019981">
    <property type="entry name" value="Ribosomal_uS11_bac-type"/>
</dbReference>
<dbReference type="InterPro" id="IPR018102">
    <property type="entry name" value="Ribosomal_uS11_CS"/>
</dbReference>
<dbReference type="InterPro" id="IPR036967">
    <property type="entry name" value="Ribosomal_uS11_sf"/>
</dbReference>
<dbReference type="NCBIfam" id="NF003698">
    <property type="entry name" value="PRK05309.1"/>
    <property type="match status" value="1"/>
</dbReference>
<dbReference type="NCBIfam" id="TIGR03632">
    <property type="entry name" value="uS11_bact"/>
    <property type="match status" value="1"/>
</dbReference>
<dbReference type="PANTHER" id="PTHR11759">
    <property type="entry name" value="40S RIBOSOMAL PROTEIN S14/30S RIBOSOMAL PROTEIN S11"/>
    <property type="match status" value="1"/>
</dbReference>
<dbReference type="Pfam" id="PF00411">
    <property type="entry name" value="Ribosomal_S11"/>
    <property type="match status" value="1"/>
</dbReference>
<dbReference type="PIRSF" id="PIRSF002131">
    <property type="entry name" value="Ribosomal_S11"/>
    <property type="match status" value="1"/>
</dbReference>
<dbReference type="SUPFAM" id="SSF53137">
    <property type="entry name" value="Translational machinery components"/>
    <property type="match status" value="1"/>
</dbReference>
<dbReference type="PROSITE" id="PS00054">
    <property type="entry name" value="RIBOSOMAL_S11"/>
    <property type="match status" value="1"/>
</dbReference>
<gene>
    <name evidence="1" type="primary">rps11</name>
</gene>
<proteinExistence type="inferred from homology"/>
<organism>
    <name type="scientific">Phaeodactylum tricornutum (strain CCAP 1055/1)</name>
    <dbReference type="NCBI Taxonomy" id="556484"/>
    <lineage>
        <taxon>Eukaryota</taxon>
        <taxon>Sar</taxon>
        <taxon>Stramenopiles</taxon>
        <taxon>Ochrophyta</taxon>
        <taxon>Bacillariophyta</taxon>
        <taxon>Bacillariophyceae</taxon>
        <taxon>Bacillariophycidae</taxon>
        <taxon>Naviculales</taxon>
        <taxon>Phaeodactylaceae</taxon>
        <taxon>Phaeodactylum</taxon>
    </lineage>
</organism>